<accession>A1A279</accession>
<protein>
    <recommendedName>
        <fullName evidence="1">tRNA dimethylallyltransferase</fullName>
        <ecNumber evidence="1">2.5.1.75</ecNumber>
    </recommendedName>
    <alternativeName>
        <fullName evidence="1">Dimethylallyl diphosphate:tRNA dimethylallyltransferase</fullName>
        <shortName evidence="1">DMAPP:tRNA dimethylallyltransferase</shortName>
        <shortName evidence="1">DMATase</shortName>
    </alternativeName>
    <alternativeName>
        <fullName evidence="1">Isopentenyl-diphosphate:tRNA isopentenyltransferase</fullName>
        <shortName evidence="1">IPP transferase</shortName>
        <shortName evidence="1">IPPT</shortName>
        <shortName evidence="1">IPTase</shortName>
    </alternativeName>
</protein>
<dbReference type="EC" id="2.5.1.75" evidence="1"/>
<dbReference type="EMBL" id="AP009256">
    <property type="protein sequence ID" value="BAF39812.1"/>
    <property type="molecule type" value="Genomic_DNA"/>
</dbReference>
<dbReference type="RefSeq" id="WP_011743388.1">
    <property type="nucleotide sequence ID" value="NC_008618.1"/>
</dbReference>
<dbReference type="SMR" id="A1A279"/>
<dbReference type="STRING" id="367928.BAD_1031"/>
<dbReference type="PaxDb" id="1680-BADO_1082"/>
<dbReference type="GeneID" id="4556415"/>
<dbReference type="KEGG" id="bad:BAD_1031"/>
<dbReference type="HOGENOM" id="CLU_032616_0_1_11"/>
<dbReference type="Proteomes" id="UP000008702">
    <property type="component" value="Chromosome"/>
</dbReference>
<dbReference type="GO" id="GO:0005524">
    <property type="term" value="F:ATP binding"/>
    <property type="evidence" value="ECO:0007669"/>
    <property type="project" value="UniProtKB-UniRule"/>
</dbReference>
<dbReference type="GO" id="GO:0052381">
    <property type="term" value="F:tRNA dimethylallyltransferase activity"/>
    <property type="evidence" value="ECO:0007669"/>
    <property type="project" value="UniProtKB-UniRule"/>
</dbReference>
<dbReference type="GO" id="GO:0006400">
    <property type="term" value="P:tRNA modification"/>
    <property type="evidence" value="ECO:0007669"/>
    <property type="project" value="TreeGrafter"/>
</dbReference>
<dbReference type="FunFam" id="1.10.20.140:FF:000001">
    <property type="entry name" value="tRNA dimethylallyltransferase"/>
    <property type="match status" value="1"/>
</dbReference>
<dbReference type="Gene3D" id="1.10.20.140">
    <property type="match status" value="1"/>
</dbReference>
<dbReference type="Gene3D" id="3.40.50.300">
    <property type="entry name" value="P-loop containing nucleotide triphosphate hydrolases"/>
    <property type="match status" value="1"/>
</dbReference>
<dbReference type="HAMAP" id="MF_00185">
    <property type="entry name" value="IPP_trans"/>
    <property type="match status" value="1"/>
</dbReference>
<dbReference type="InterPro" id="IPR039657">
    <property type="entry name" value="Dimethylallyltransferase"/>
</dbReference>
<dbReference type="InterPro" id="IPR018022">
    <property type="entry name" value="IPT"/>
</dbReference>
<dbReference type="InterPro" id="IPR027417">
    <property type="entry name" value="P-loop_NTPase"/>
</dbReference>
<dbReference type="NCBIfam" id="TIGR00174">
    <property type="entry name" value="miaA"/>
    <property type="match status" value="1"/>
</dbReference>
<dbReference type="PANTHER" id="PTHR11088">
    <property type="entry name" value="TRNA DIMETHYLALLYLTRANSFERASE"/>
    <property type="match status" value="1"/>
</dbReference>
<dbReference type="PANTHER" id="PTHR11088:SF60">
    <property type="entry name" value="TRNA DIMETHYLALLYLTRANSFERASE"/>
    <property type="match status" value="1"/>
</dbReference>
<dbReference type="Pfam" id="PF01715">
    <property type="entry name" value="IPPT"/>
    <property type="match status" value="1"/>
</dbReference>
<dbReference type="SUPFAM" id="SSF52540">
    <property type="entry name" value="P-loop containing nucleoside triphosphate hydrolases"/>
    <property type="match status" value="1"/>
</dbReference>
<sequence>MPSATESKPETRKVVSIVGPTASGKTGLGIAIAKALEAKGEQAEIVNADAYQMYKGMDIGTAKASPEEQAEVRHHLIDIIEPDDAMSVARFQEIARAKIAELQAREVRPILVGGSGLYARAAIDDISFPGTDPEVRKRLEEREKVEGAGALFDELKTKDPEAAARMDPHNPRRTIRALEVIEVTGRPYSASLPHYRYVIPTVQIGLDLPREELDRRIDIRTKQMLENGFVEEVERIRPRLGITAGKALGYQQVVDYLDGLCDLNDTFMSIAQKTKRLARKQMGWFGRDPRIHWLQALNPALLGNAMAIIEHADAGDYDAIDAQADAYTQHHLGDIA</sequence>
<organism>
    <name type="scientific">Bifidobacterium adolescentis (strain ATCC 15703 / DSM 20083 / NCTC 11814 / E194a)</name>
    <dbReference type="NCBI Taxonomy" id="367928"/>
    <lineage>
        <taxon>Bacteria</taxon>
        <taxon>Bacillati</taxon>
        <taxon>Actinomycetota</taxon>
        <taxon>Actinomycetes</taxon>
        <taxon>Bifidobacteriales</taxon>
        <taxon>Bifidobacteriaceae</taxon>
        <taxon>Bifidobacterium</taxon>
    </lineage>
</organism>
<name>MIAA_BIFAA</name>
<keyword id="KW-0067">ATP-binding</keyword>
<keyword id="KW-0460">Magnesium</keyword>
<keyword id="KW-0547">Nucleotide-binding</keyword>
<keyword id="KW-1185">Reference proteome</keyword>
<keyword id="KW-0808">Transferase</keyword>
<keyword id="KW-0819">tRNA processing</keyword>
<proteinExistence type="inferred from homology"/>
<comment type="function">
    <text evidence="1">Catalyzes the transfer of a dimethylallyl group onto the adenine at position 37 in tRNAs that read codons beginning with uridine, leading to the formation of N6-(dimethylallyl)adenosine (i(6)A).</text>
</comment>
<comment type="catalytic activity">
    <reaction evidence="1">
        <text>adenosine(37) in tRNA + dimethylallyl diphosphate = N(6)-dimethylallyladenosine(37) in tRNA + diphosphate</text>
        <dbReference type="Rhea" id="RHEA:26482"/>
        <dbReference type="Rhea" id="RHEA-COMP:10162"/>
        <dbReference type="Rhea" id="RHEA-COMP:10375"/>
        <dbReference type="ChEBI" id="CHEBI:33019"/>
        <dbReference type="ChEBI" id="CHEBI:57623"/>
        <dbReference type="ChEBI" id="CHEBI:74411"/>
        <dbReference type="ChEBI" id="CHEBI:74415"/>
        <dbReference type="EC" id="2.5.1.75"/>
    </reaction>
</comment>
<comment type="cofactor">
    <cofactor evidence="1">
        <name>Mg(2+)</name>
        <dbReference type="ChEBI" id="CHEBI:18420"/>
    </cofactor>
</comment>
<comment type="subunit">
    <text evidence="1">Monomer.</text>
</comment>
<comment type="similarity">
    <text evidence="1">Belongs to the IPP transferase family.</text>
</comment>
<gene>
    <name evidence="1" type="primary">miaA</name>
    <name type="ordered locus">BAD_1031</name>
</gene>
<feature type="chain" id="PRO_0000377085" description="tRNA dimethylallyltransferase">
    <location>
        <begin position="1"/>
        <end position="336"/>
    </location>
</feature>
<feature type="binding site" evidence="1">
    <location>
        <begin position="19"/>
        <end position="26"/>
    </location>
    <ligand>
        <name>ATP</name>
        <dbReference type="ChEBI" id="CHEBI:30616"/>
    </ligand>
</feature>
<feature type="binding site" evidence="1">
    <location>
        <begin position="21"/>
        <end position="26"/>
    </location>
    <ligand>
        <name>substrate</name>
    </ligand>
</feature>
<feature type="site" description="Interaction with substrate tRNA" evidence="1">
    <location>
        <position position="115"/>
    </location>
</feature>
<feature type="site" description="Interaction with substrate tRNA" evidence="1">
    <location>
        <position position="136"/>
    </location>
</feature>
<evidence type="ECO:0000255" key="1">
    <source>
        <dbReference type="HAMAP-Rule" id="MF_00185"/>
    </source>
</evidence>
<reference key="1">
    <citation type="submission" date="2006-12" db="EMBL/GenBank/DDBJ databases">
        <title>Bifidobacterium adolescentis complete genome sequence.</title>
        <authorList>
            <person name="Suzuki T."/>
            <person name="Tsuda Y."/>
            <person name="Kanou N."/>
            <person name="Inoue T."/>
            <person name="Kumazaki K."/>
            <person name="Nagano S."/>
            <person name="Hirai S."/>
            <person name="Tanaka K."/>
            <person name="Watanabe K."/>
        </authorList>
    </citation>
    <scope>NUCLEOTIDE SEQUENCE [LARGE SCALE GENOMIC DNA]</scope>
    <source>
        <strain>ATCC 15703 / DSM 20083 / NCTC 11814 / E194a</strain>
    </source>
</reference>